<accession>A1YIY0</accession>
<accession>E9QM04</accession>
<organism>
    <name type="scientific">Mus musculus</name>
    <name type="common">Mouse</name>
    <dbReference type="NCBI Taxonomy" id="10090"/>
    <lineage>
        <taxon>Eukaryota</taxon>
        <taxon>Metazoa</taxon>
        <taxon>Chordata</taxon>
        <taxon>Craniata</taxon>
        <taxon>Vertebrata</taxon>
        <taxon>Euteleostomi</taxon>
        <taxon>Mammalia</taxon>
        <taxon>Eutheria</taxon>
        <taxon>Euarchontoglires</taxon>
        <taxon>Glires</taxon>
        <taxon>Rodentia</taxon>
        <taxon>Myomorpha</taxon>
        <taxon>Muroidea</taxon>
        <taxon>Muridae</taxon>
        <taxon>Murinae</taxon>
        <taxon>Mus</taxon>
        <taxon>Mus</taxon>
    </lineage>
</organism>
<gene>
    <name type="primary">Fcrl6</name>
</gene>
<feature type="signal peptide" evidence="2">
    <location>
        <begin position="1"/>
        <end position="16"/>
    </location>
</feature>
<feature type="chain" id="PRO_0000280214" description="Fc receptor-like protein 6">
    <location>
        <begin position="17"/>
        <end position="268"/>
    </location>
</feature>
<feature type="topological domain" description="Extracellular" evidence="2">
    <location>
        <begin position="17"/>
        <end position="215"/>
    </location>
</feature>
<feature type="transmembrane region" description="Helical" evidence="2">
    <location>
        <begin position="216"/>
        <end position="236"/>
    </location>
</feature>
<feature type="topological domain" description="Cytoplasmic" evidence="2">
    <location>
        <begin position="237"/>
        <end position="268"/>
    </location>
</feature>
<feature type="domain" description="Ig-like C2-type">
    <location>
        <begin position="114"/>
        <end position="194"/>
    </location>
</feature>
<feature type="glycosylation site" description="N-linked (GlcNAc...) asparagine" evidence="2">
    <location>
        <position position="180"/>
    </location>
</feature>
<feature type="glycosylation site" description="N-linked (GlcNAc...) asparagine" evidence="2">
    <location>
        <position position="188"/>
    </location>
</feature>
<feature type="disulfide bond" evidence="3">
    <location>
        <begin position="135"/>
        <end position="183"/>
    </location>
</feature>
<feature type="splice variant" id="VSP_053295" description="In isoform 2." evidence="4">
    <original>A</original>
    <variation>G</variation>
    <location>
        <position position="244"/>
    </location>
</feature>
<feature type="splice variant" id="VSP_053296" description="In isoform 2." evidence="4">
    <location>
        <begin position="245"/>
        <end position="268"/>
    </location>
</feature>
<feature type="sequence conflict" description="In Ref. 1; ABL86186." evidence="5" ref="1">
    <original>L</original>
    <variation>Q</variation>
    <location>
        <position position="19"/>
    </location>
</feature>
<evidence type="ECO:0000250" key="1">
    <source>
        <dbReference type="UniProtKB" id="Q6DN72"/>
    </source>
</evidence>
<evidence type="ECO:0000255" key="2"/>
<evidence type="ECO:0000255" key="3">
    <source>
        <dbReference type="PROSITE-ProRule" id="PRU00114"/>
    </source>
</evidence>
<evidence type="ECO:0000303" key="4">
    <source>
    </source>
</evidence>
<evidence type="ECO:0000305" key="5"/>
<name>FCRL6_MOUSE</name>
<keyword id="KW-0025">Alternative splicing</keyword>
<keyword id="KW-1003">Cell membrane</keyword>
<keyword id="KW-1015">Disulfide bond</keyword>
<keyword id="KW-0325">Glycoprotein</keyword>
<keyword id="KW-0393">Immunoglobulin domain</keyword>
<keyword id="KW-0472">Membrane</keyword>
<keyword id="KW-0675">Receptor</keyword>
<keyword id="KW-1185">Reference proteome</keyword>
<keyword id="KW-0732">Signal</keyword>
<keyword id="KW-0812">Transmembrane</keyword>
<keyword id="KW-1133">Transmembrane helix</keyword>
<proteinExistence type="evidence at transcript level"/>
<reference key="1">
    <citation type="journal article" date="2007" name="Blood">
        <title>FcRL6, a new ITIM-bearing receptor on cytolytic cells, is broadly expressed by lymphocytes following HIV-1 infection.</title>
        <authorList>
            <person name="Wilson T.J."/>
            <person name="Presti R.M."/>
            <person name="Tassi I."/>
            <person name="Overton E.T."/>
            <person name="Cella M."/>
            <person name="Colonna M."/>
        </authorList>
    </citation>
    <scope>NUCLEOTIDE SEQUENCE [MRNA] (ISOFORM 2)</scope>
    <source>
        <strain>C57BL/6J</strain>
    </source>
</reference>
<reference key="2">
    <citation type="journal article" date="2009" name="PLoS Biol.">
        <title>Lineage-specific biology revealed by a finished genome assembly of the mouse.</title>
        <authorList>
            <person name="Church D.M."/>
            <person name="Goodstadt L."/>
            <person name="Hillier L.W."/>
            <person name="Zody M.C."/>
            <person name="Goldstein S."/>
            <person name="She X."/>
            <person name="Bult C.J."/>
            <person name="Agarwala R."/>
            <person name="Cherry J.L."/>
            <person name="DiCuccio M."/>
            <person name="Hlavina W."/>
            <person name="Kapustin Y."/>
            <person name="Meric P."/>
            <person name="Maglott D."/>
            <person name="Birtle Z."/>
            <person name="Marques A.C."/>
            <person name="Graves T."/>
            <person name="Zhou S."/>
            <person name="Teague B."/>
            <person name="Potamousis K."/>
            <person name="Churas C."/>
            <person name="Place M."/>
            <person name="Herschleb J."/>
            <person name="Runnheim R."/>
            <person name="Forrest D."/>
            <person name="Amos-Landgraf J."/>
            <person name="Schwartz D.C."/>
            <person name="Cheng Z."/>
            <person name="Lindblad-Toh K."/>
            <person name="Eichler E.E."/>
            <person name="Ponting C.P."/>
        </authorList>
    </citation>
    <scope>NUCLEOTIDE SEQUENCE [LARGE SCALE GENOMIC DNA]</scope>
    <source>
        <strain>C57BL/6J</strain>
    </source>
</reference>
<dbReference type="EMBL" id="EF032497">
    <property type="protein sequence ID" value="ABL86186.1"/>
    <property type="molecule type" value="mRNA"/>
</dbReference>
<dbReference type="EMBL" id="AC131177">
    <property type="status" value="NOT_ANNOTATED_CDS"/>
    <property type="molecule type" value="Genomic_DNA"/>
</dbReference>
<dbReference type="CCDS" id="CCDS48448.1">
    <molecule id="A1YIY0-1"/>
</dbReference>
<dbReference type="RefSeq" id="NP_001158197.1">
    <molecule id="A1YIY0-1"/>
    <property type="nucleotide sequence ID" value="NM_001164725.1"/>
</dbReference>
<dbReference type="FunCoup" id="A1YIY0">
    <property type="interactions" value="178"/>
</dbReference>
<dbReference type="STRING" id="10090.ENSMUSP00000091861"/>
<dbReference type="GlyCosmos" id="A1YIY0">
    <property type="glycosylation" value="2 sites, No reported glycans"/>
</dbReference>
<dbReference type="GlyGen" id="A1YIY0">
    <property type="glycosylation" value="2 sites"/>
</dbReference>
<dbReference type="iPTMnet" id="A1YIY0"/>
<dbReference type="PhosphoSitePlus" id="A1YIY0"/>
<dbReference type="PaxDb" id="10090-ENSMUSP00000091861"/>
<dbReference type="Antibodypedia" id="47058">
    <property type="antibodies" value="83 antibodies from 14 providers"/>
</dbReference>
<dbReference type="Ensembl" id="ENSMUST00000094303.6">
    <molecule id="A1YIY0-1"/>
    <property type="protein sequence ID" value="ENSMUSP00000091861.5"/>
    <property type="gene ID" value="ENSMUSG00000070504.10"/>
</dbReference>
<dbReference type="GeneID" id="677296"/>
<dbReference type="KEGG" id="mmu:677296"/>
<dbReference type="UCSC" id="uc011wwo.1">
    <molecule id="A1YIY0-1"/>
    <property type="organism name" value="mouse"/>
</dbReference>
<dbReference type="AGR" id="MGI:3618339"/>
<dbReference type="CTD" id="343413"/>
<dbReference type="MGI" id="MGI:3618339">
    <property type="gene designation" value="Fcrl6"/>
</dbReference>
<dbReference type="VEuPathDB" id="HostDB:ENSMUSG00000070504"/>
<dbReference type="eggNOG" id="ENOG502RU0I">
    <property type="taxonomic scope" value="Eukaryota"/>
</dbReference>
<dbReference type="GeneTree" id="ENSGT01050000244808"/>
<dbReference type="HOGENOM" id="CLU_023383_5_1_1"/>
<dbReference type="InParanoid" id="A1YIY0"/>
<dbReference type="OMA" id="YACEISA"/>
<dbReference type="OrthoDB" id="9950534at2759"/>
<dbReference type="PhylomeDB" id="A1YIY0"/>
<dbReference type="BioGRID-ORCS" id="677296">
    <property type="hits" value="1 hit in 77 CRISPR screens"/>
</dbReference>
<dbReference type="PRO" id="PR:A1YIY0"/>
<dbReference type="Proteomes" id="UP000000589">
    <property type="component" value="Chromosome 1"/>
</dbReference>
<dbReference type="RNAct" id="A1YIY0">
    <property type="molecule type" value="protein"/>
</dbReference>
<dbReference type="Bgee" id="ENSMUSG00000070504">
    <property type="expression patterns" value="Expressed in mesodermal cell in embryo and 9 other cell types or tissues"/>
</dbReference>
<dbReference type="GO" id="GO:0009897">
    <property type="term" value="C:external side of plasma membrane"/>
    <property type="evidence" value="ECO:0000314"/>
    <property type="project" value="MGI"/>
</dbReference>
<dbReference type="GO" id="GO:0019903">
    <property type="term" value="F:protein phosphatase binding"/>
    <property type="evidence" value="ECO:0000353"/>
    <property type="project" value="MGI"/>
</dbReference>
<dbReference type="FunFam" id="2.60.40.10:FF:000357">
    <property type="entry name" value="Fc receptor like 1"/>
    <property type="match status" value="1"/>
</dbReference>
<dbReference type="Gene3D" id="2.60.40.10">
    <property type="entry name" value="Immunoglobulins"/>
    <property type="match status" value="2"/>
</dbReference>
<dbReference type="InterPro" id="IPR007110">
    <property type="entry name" value="Ig-like_dom"/>
</dbReference>
<dbReference type="InterPro" id="IPR036179">
    <property type="entry name" value="Ig-like_dom_sf"/>
</dbReference>
<dbReference type="InterPro" id="IPR013783">
    <property type="entry name" value="Ig-like_fold"/>
</dbReference>
<dbReference type="InterPro" id="IPR050488">
    <property type="entry name" value="Ig_Fc_receptor"/>
</dbReference>
<dbReference type="InterPro" id="IPR040878">
    <property type="entry name" value="IL-40-like_Ig"/>
</dbReference>
<dbReference type="PANTHER" id="PTHR11481:SF101">
    <property type="entry name" value="FC RECEPTOR-LIKE PROTEIN 2"/>
    <property type="match status" value="1"/>
</dbReference>
<dbReference type="PANTHER" id="PTHR11481">
    <property type="entry name" value="IMMUNOGLOBULIN FC RECEPTOR"/>
    <property type="match status" value="1"/>
</dbReference>
<dbReference type="Pfam" id="PF13895">
    <property type="entry name" value="Ig_2"/>
    <property type="match status" value="1"/>
</dbReference>
<dbReference type="Pfam" id="PF17736">
    <property type="entry name" value="Ig_C17orf99"/>
    <property type="match status" value="1"/>
</dbReference>
<dbReference type="SUPFAM" id="SSF48726">
    <property type="entry name" value="Immunoglobulin"/>
    <property type="match status" value="2"/>
</dbReference>
<dbReference type="PROSITE" id="PS50835">
    <property type="entry name" value="IG_LIKE"/>
    <property type="match status" value="1"/>
</dbReference>
<protein>
    <recommendedName>
        <fullName>Fc receptor-like protein 6</fullName>
        <shortName>FcR-like protein 6</shortName>
        <shortName>FcRL6</shortName>
    </recommendedName>
</protein>
<comment type="function">
    <text evidence="1">Acts as a MHC class II receptor. When stimulated on its own, does not play a role in cytokine production or the release of cytotoxic granules by NK cells and cytotoxic CD8(+) T cells. Does not act as an Fc receptor.</text>
</comment>
<comment type="subunit">
    <text evidence="1">Interacts with class II MHC.</text>
</comment>
<comment type="subcellular location">
    <subcellularLocation>
        <location evidence="1">Cell membrane</location>
        <topology evidence="5">Single-pass type I membrane protein</topology>
    </subcellularLocation>
</comment>
<comment type="alternative products">
    <event type="alternative splicing"/>
    <isoform>
        <id>A1YIY0-1</id>
        <name>1</name>
        <sequence type="displayed"/>
    </isoform>
    <isoform>
        <id>A1YIY0-2</id>
        <name>2</name>
        <sequence type="described" ref="VSP_053295 VSP_053296"/>
    </isoform>
</comment>
<sequence>MLLWMVLLLCESMAEAQELFPNPELTEFTNSETMDVILKCTIKVDPKNPTLQLFYTFYKNNHVIQDRSPHSVFSAEAKEENSGLYQCMVDTEDGLIQKKSGYLDIQFWTPVSHPVLTLQHEATNLAVGDKVEFLCEAHQGSLPIFYSFYINGEILGKPLAPSGRAASLLASVKAEWSTKNYSCEAKNNISREISELKKFPLVVSGTAWIKSNMLPIWLPASLLGGMVIAAVVLMYFFKPCKKHARPETPTLKEPDSFLYVSVDNQRYK</sequence>